<proteinExistence type="predicted"/>
<name>YGAC_ECO57</name>
<feature type="chain" id="PRO_0000169292" description="Uncharacterized protein YgaC">
    <location>
        <begin position="1"/>
        <end position="114"/>
    </location>
</feature>
<gene>
    <name type="primary">ygaC</name>
    <name type="ordered locus">Z3971</name>
    <name type="ordered locus">ECs3532</name>
</gene>
<protein>
    <recommendedName>
        <fullName>Uncharacterized protein YgaC</fullName>
    </recommendedName>
</protein>
<dbReference type="EMBL" id="AE005174">
    <property type="protein sequence ID" value="AAG57779.1"/>
    <property type="molecule type" value="Genomic_DNA"/>
</dbReference>
<dbReference type="EMBL" id="BA000007">
    <property type="protein sequence ID" value="BAB36955.1"/>
    <property type="molecule type" value="Genomic_DNA"/>
</dbReference>
<dbReference type="PIR" id="D91070">
    <property type="entry name" value="D91070"/>
</dbReference>
<dbReference type="PIR" id="G85914">
    <property type="entry name" value="G85914"/>
</dbReference>
<dbReference type="RefSeq" id="NP_311559.1">
    <property type="nucleotide sequence ID" value="NC_002695.1"/>
</dbReference>
<dbReference type="RefSeq" id="WP_000281320.1">
    <property type="nucleotide sequence ID" value="NZ_VOAI01000003.1"/>
</dbReference>
<dbReference type="SMR" id="P0AD55"/>
<dbReference type="STRING" id="155864.Z3971"/>
<dbReference type="GeneID" id="914752"/>
<dbReference type="KEGG" id="ece:Z3971"/>
<dbReference type="KEGG" id="ecs:ECs_3532"/>
<dbReference type="PATRIC" id="fig|386585.9.peg.3686"/>
<dbReference type="eggNOG" id="ENOG502ZQRR">
    <property type="taxonomic scope" value="Bacteria"/>
</dbReference>
<dbReference type="HOGENOM" id="CLU_2095143_0_0_6"/>
<dbReference type="OMA" id="GICHGFS"/>
<dbReference type="Proteomes" id="UP000000558">
    <property type="component" value="Chromosome"/>
</dbReference>
<dbReference type="Proteomes" id="UP000002519">
    <property type="component" value="Chromosome"/>
</dbReference>
<dbReference type="Gene3D" id="3.90.1150.40">
    <property type="entry name" value="Protein of unknown function DUF2002"/>
    <property type="match status" value="1"/>
</dbReference>
<dbReference type="InterPro" id="IPR018994">
    <property type="entry name" value="DUF2002"/>
</dbReference>
<dbReference type="NCBIfam" id="NF007844">
    <property type="entry name" value="PRK10556.1-2"/>
    <property type="match status" value="1"/>
</dbReference>
<dbReference type="NCBIfam" id="NF007845">
    <property type="entry name" value="PRK10556.1-3"/>
    <property type="match status" value="1"/>
</dbReference>
<dbReference type="NCBIfam" id="NF007846">
    <property type="entry name" value="PRK10556.1-4"/>
    <property type="match status" value="1"/>
</dbReference>
<dbReference type="Pfam" id="PF09400">
    <property type="entry name" value="DUF2002"/>
    <property type="match status" value="1"/>
</dbReference>
<dbReference type="SUPFAM" id="SSF159894">
    <property type="entry name" value="YgaC/TfoX-N like"/>
    <property type="match status" value="1"/>
</dbReference>
<sequence>MYLRPDEVARVLEKVGFTVDVVTQKAYGYRRGENYVYVNREARMGRTALVIHPTLKERSSTLAEPASDIKTCDHYQQFPLYLAGERHEHYGIPHGFSSRVALERYLNGLFGEAS</sequence>
<accession>P0AD55</accession>
<accession>P36931</accession>
<accession>P76627</accession>
<accession>P77024</accession>
<organism>
    <name type="scientific">Escherichia coli O157:H7</name>
    <dbReference type="NCBI Taxonomy" id="83334"/>
    <lineage>
        <taxon>Bacteria</taxon>
        <taxon>Pseudomonadati</taxon>
        <taxon>Pseudomonadota</taxon>
        <taxon>Gammaproteobacteria</taxon>
        <taxon>Enterobacterales</taxon>
        <taxon>Enterobacteriaceae</taxon>
        <taxon>Escherichia</taxon>
    </lineage>
</organism>
<reference key="1">
    <citation type="journal article" date="2001" name="Nature">
        <title>Genome sequence of enterohaemorrhagic Escherichia coli O157:H7.</title>
        <authorList>
            <person name="Perna N.T."/>
            <person name="Plunkett G. III"/>
            <person name="Burland V."/>
            <person name="Mau B."/>
            <person name="Glasner J.D."/>
            <person name="Rose D.J."/>
            <person name="Mayhew G.F."/>
            <person name="Evans P.S."/>
            <person name="Gregor J."/>
            <person name="Kirkpatrick H.A."/>
            <person name="Posfai G."/>
            <person name="Hackett J."/>
            <person name="Klink S."/>
            <person name="Boutin A."/>
            <person name="Shao Y."/>
            <person name="Miller L."/>
            <person name="Grotbeck E.J."/>
            <person name="Davis N.W."/>
            <person name="Lim A."/>
            <person name="Dimalanta E.T."/>
            <person name="Potamousis K."/>
            <person name="Apodaca J."/>
            <person name="Anantharaman T.S."/>
            <person name="Lin J."/>
            <person name="Yen G."/>
            <person name="Schwartz D.C."/>
            <person name="Welch R.A."/>
            <person name="Blattner F.R."/>
        </authorList>
    </citation>
    <scope>NUCLEOTIDE SEQUENCE [LARGE SCALE GENOMIC DNA]</scope>
    <source>
        <strain>O157:H7 / EDL933 / ATCC 700927 / EHEC</strain>
    </source>
</reference>
<reference key="2">
    <citation type="journal article" date="2001" name="DNA Res.">
        <title>Complete genome sequence of enterohemorrhagic Escherichia coli O157:H7 and genomic comparison with a laboratory strain K-12.</title>
        <authorList>
            <person name="Hayashi T."/>
            <person name="Makino K."/>
            <person name="Ohnishi M."/>
            <person name="Kurokawa K."/>
            <person name="Ishii K."/>
            <person name="Yokoyama K."/>
            <person name="Han C.-G."/>
            <person name="Ohtsubo E."/>
            <person name="Nakayama K."/>
            <person name="Murata T."/>
            <person name="Tanaka M."/>
            <person name="Tobe T."/>
            <person name="Iida T."/>
            <person name="Takami H."/>
            <person name="Honda T."/>
            <person name="Sasakawa C."/>
            <person name="Ogasawara N."/>
            <person name="Yasunaga T."/>
            <person name="Kuhara S."/>
            <person name="Shiba T."/>
            <person name="Hattori M."/>
            <person name="Shinagawa H."/>
        </authorList>
    </citation>
    <scope>NUCLEOTIDE SEQUENCE [LARGE SCALE GENOMIC DNA]</scope>
    <source>
        <strain>O157:H7 / Sakai / RIMD 0509952 / EHEC</strain>
    </source>
</reference>
<keyword id="KW-1185">Reference proteome</keyword>